<keyword id="KW-0073">Auxin biosynthesis</keyword>
<keyword id="KW-0256">Endoplasmic reticulum</keyword>
<keyword id="KW-0274">FAD</keyword>
<keyword id="KW-0285">Flavoprotein</keyword>
<keyword id="KW-0503">Monooxygenase</keyword>
<keyword id="KW-0521">NADP</keyword>
<keyword id="KW-0560">Oxidoreductase</keyword>
<keyword id="KW-1185">Reference proteome</keyword>
<protein>
    <recommendedName>
        <fullName evidence="10">Indole-3-pyruvate monooxygenase YUCCA8</fullName>
        <shortName evidence="9">OsYUCCA8</shortName>
        <ecNumber evidence="4">1.14.13.168</ecNumber>
    </recommendedName>
    <alternativeName>
        <fullName evidence="10">Flavin-containing monooxygenase YUCCA8</fullName>
    </alternativeName>
    <alternativeName>
        <fullName evidence="10">OsFMOt</fullName>
    </alternativeName>
    <alternativeName>
        <fullName evidence="6">Protein CONSTITUTIVELY WILTED 1</fullName>
        <shortName evidence="6">OsCOW1</shortName>
    </alternativeName>
    <alternativeName>
        <fullName evidence="7">Protein NARROW LEAF 7</fullName>
    </alternativeName>
    <alternativeName>
        <fullName evidence="8">Protein RICE ETHYLENE-INSENSITIVE 7</fullName>
    </alternativeName>
</protein>
<accession>Q10RE2</accession>
<accession>Q8H7Y7</accession>
<sequence length="421" mass="45720">MQGQQKQNAGGGGGDNASPCIVLDGPIIVGAGPSGLAVAATLRQHGAPFTVVERSGGVADLWTNRTYDRLRLHLPKVFCELPHVAFPPDFPTYPTKHDFLRYLHSYAARFAIAPLLRRTVTRAWYDHPASLWRVTTTTTSSSATSVITEYASPWLVVASGENAEVVVPKVKGRERFAGEALHSSEYRSGERFRGMRVLVVGCGNSGMEMCLDLCEHGAMPFMSVRSGVHVLPREMFGASTFGIAMKLLRWLPIKMVDRFLLLVARMVLGDTEKYGLKRPKLGPLEIKNITGKSPVLDVGAWSLIKSGNIKIVPEVESFSGNGARFVDGNEMAFDAVIFATGYRSNVPSWLQEDGELFTEEGKLRSSGSSSEWRWRGPNGLYCVGFSGRGLLGAGADALRAAADIAGRWQETQQAAANISSV</sequence>
<proteinExistence type="evidence at protein level"/>
<evidence type="ECO:0000255" key="1"/>
<evidence type="ECO:0000269" key="2">
    <source>
    </source>
</evidence>
<evidence type="ECO:0000269" key="3">
    <source>
    </source>
</evidence>
<evidence type="ECO:0000269" key="4">
    <source>
    </source>
</evidence>
<evidence type="ECO:0000269" key="5">
    <source>
    </source>
</evidence>
<evidence type="ECO:0000303" key="6">
    <source>
    </source>
</evidence>
<evidence type="ECO:0000303" key="7">
    <source>
    </source>
</evidence>
<evidence type="ECO:0000303" key="8">
    <source>
    </source>
</evidence>
<evidence type="ECO:0000303" key="9">
    <source>
    </source>
</evidence>
<evidence type="ECO:0000305" key="10"/>
<evidence type="ECO:0000312" key="11">
    <source>
        <dbReference type="EMBL" id="AAN06861.1"/>
    </source>
</evidence>
<evidence type="ECO:0000312" key="12">
    <source>
        <dbReference type="EMBL" id="ABF94120.1"/>
    </source>
</evidence>
<evidence type="ECO:0000312" key="13">
    <source>
        <dbReference type="EMBL" id="BAF10962.1"/>
    </source>
</evidence>
<dbReference type="EC" id="1.14.13.168" evidence="4"/>
<dbReference type="EMBL" id="AB354302">
    <property type="protein sequence ID" value="BAG14341.1"/>
    <property type="molecule type" value="Genomic_DNA"/>
</dbReference>
<dbReference type="EMBL" id="AC105729">
    <property type="protein sequence ID" value="AAN06861.1"/>
    <property type="status" value="ALT_SEQ"/>
    <property type="molecule type" value="Genomic_DNA"/>
</dbReference>
<dbReference type="EMBL" id="DP000009">
    <property type="protein sequence ID" value="ABF94120.1"/>
    <property type="molecule type" value="Genomic_DNA"/>
</dbReference>
<dbReference type="EMBL" id="AP008209">
    <property type="protein sequence ID" value="BAF10962.1"/>
    <property type="molecule type" value="Genomic_DNA"/>
</dbReference>
<dbReference type="EMBL" id="AP014959">
    <property type="protein sequence ID" value="BAS82425.1"/>
    <property type="molecule type" value="Genomic_DNA"/>
</dbReference>
<dbReference type="EMBL" id="AK072466">
    <property type="protein sequence ID" value="BAG92984.1"/>
    <property type="molecule type" value="mRNA"/>
</dbReference>
<dbReference type="RefSeq" id="XP_015631027.1">
    <property type="nucleotide sequence ID" value="XM_015775541.1"/>
</dbReference>
<dbReference type="RefSeq" id="XP_015631028.1">
    <property type="nucleotide sequence ID" value="XM_015775542.1"/>
</dbReference>
<dbReference type="RefSeq" id="XP_015631029.1">
    <property type="nucleotide sequence ID" value="XM_015775543.1"/>
</dbReference>
<dbReference type="SMR" id="Q10RE2"/>
<dbReference type="FunCoup" id="Q10RE2">
    <property type="interactions" value="13"/>
</dbReference>
<dbReference type="STRING" id="39947.Q10RE2"/>
<dbReference type="PaxDb" id="39947-Q10RE2"/>
<dbReference type="EnsemblPlants" id="Os03t0162000-01">
    <property type="protein sequence ID" value="Os03t0162000-01"/>
    <property type="gene ID" value="Os03g0162000"/>
</dbReference>
<dbReference type="Gramene" id="Os03t0162000-01">
    <property type="protein sequence ID" value="Os03t0162000-01"/>
    <property type="gene ID" value="Os03g0162000"/>
</dbReference>
<dbReference type="KEGG" id="dosa:Os03g0162000"/>
<dbReference type="eggNOG" id="KOG1399">
    <property type="taxonomic scope" value="Eukaryota"/>
</dbReference>
<dbReference type="HOGENOM" id="CLU_006909_2_0_1"/>
<dbReference type="InParanoid" id="Q10RE2"/>
<dbReference type="OMA" id="HVGFPAD"/>
<dbReference type="OrthoDB" id="66881at2759"/>
<dbReference type="Proteomes" id="UP000000763">
    <property type="component" value="Chromosome 3"/>
</dbReference>
<dbReference type="Proteomes" id="UP000059680">
    <property type="component" value="Chromosome 3"/>
</dbReference>
<dbReference type="GO" id="GO:0005783">
    <property type="term" value="C:endoplasmic reticulum"/>
    <property type="evidence" value="ECO:0000314"/>
    <property type="project" value="UniProtKB"/>
</dbReference>
<dbReference type="GO" id="GO:0050660">
    <property type="term" value="F:flavin adenine dinucleotide binding"/>
    <property type="evidence" value="ECO:0000318"/>
    <property type="project" value="GO_Central"/>
</dbReference>
<dbReference type="GO" id="GO:0103075">
    <property type="term" value="F:indole-3-pyruvate monooxygenase activity"/>
    <property type="evidence" value="ECO:0000314"/>
    <property type="project" value="UniProtKB"/>
</dbReference>
<dbReference type="GO" id="GO:0004497">
    <property type="term" value="F:monooxygenase activity"/>
    <property type="evidence" value="ECO:0000318"/>
    <property type="project" value="GO_Central"/>
</dbReference>
<dbReference type="GO" id="GO:0004499">
    <property type="term" value="F:N,N-dimethylaniline monooxygenase activity"/>
    <property type="evidence" value="ECO:0007669"/>
    <property type="project" value="InterPro"/>
</dbReference>
<dbReference type="GO" id="GO:0050661">
    <property type="term" value="F:NADP binding"/>
    <property type="evidence" value="ECO:0007669"/>
    <property type="project" value="InterPro"/>
</dbReference>
<dbReference type="GO" id="GO:0009851">
    <property type="term" value="P:auxin biosynthetic process"/>
    <property type="evidence" value="ECO:0000315"/>
    <property type="project" value="UniProtKB"/>
</dbReference>
<dbReference type="GO" id="GO:2000024">
    <property type="term" value="P:regulation of leaf development"/>
    <property type="evidence" value="ECO:0000315"/>
    <property type="project" value="UniProtKB"/>
</dbReference>
<dbReference type="GO" id="GO:2000280">
    <property type="term" value="P:regulation of root development"/>
    <property type="evidence" value="ECO:0000315"/>
    <property type="project" value="UniProtKB"/>
</dbReference>
<dbReference type="FunFam" id="3.50.50.60:FF:000100">
    <property type="entry name" value="Flavin-containing monooxygenase"/>
    <property type="match status" value="1"/>
</dbReference>
<dbReference type="Gene3D" id="3.50.50.60">
    <property type="entry name" value="FAD/NAD(P)-binding domain"/>
    <property type="match status" value="1"/>
</dbReference>
<dbReference type="InterPro" id="IPR050982">
    <property type="entry name" value="Auxin_biosynth/cation_transpt"/>
</dbReference>
<dbReference type="InterPro" id="IPR036188">
    <property type="entry name" value="FAD/NAD-bd_sf"/>
</dbReference>
<dbReference type="InterPro" id="IPR020946">
    <property type="entry name" value="Flavin_mOase-like"/>
</dbReference>
<dbReference type="PANTHER" id="PTHR43539">
    <property type="entry name" value="FLAVIN-BINDING MONOOXYGENASE-LIKE PROTEIN (AFU_ORTHOLOGUE AFUA_4G09220)"/>
    <property type="match status" value="1"/>
</dbReference>
<dbReference type="PANTHER" id="PTHR43539:SF51">
    <property type="entry name" value="INDOLE-3-PYRUVATE MONOOXYGENASE YUCCA8"/>
    <property type="match status" value="1"/>
</dbReference>
<dbReference type="Pfam" id="PF00743">
    <property type="entry name" value="FMO-like"/>
    <property type="match status" value="1"/>
</dbReference>
<dbReference type="PRINTS" id="PR00368">
    <property type="entry name" value="FADPNR"/>
</dbReference>
<dbReference type="PRINTS" id="PR00469">
    <property type="entry name" value="PNDRDTASEII"/>
</dbReference>
<dbReference type="SUPFAM" id="SSF51905">
    <property type="entry name" value="FAD/NAD(P)-binding domain"/>
    <property type="match status" value="2"/>
</dbReference>
<comment type="function">
    <text evidence="2 3 4 5">Involved in auxin biosynthesis (PubMed:18293011, PubMed:28829777, PubMed:29740464). Converts the indole-3-pyruvic acid (IPA) produced by the TAA family to indole-3-acetic acid (IAA) (PubMed:28829777). Seems not able to use tryptamine (TAM) as substrate (PubMed:28829777). Probably responsible for auxin biosynthesis in leaves and involved in the regulation of lateral leaf growth (PubMed:18293011). Required for maintaining water homeostasis and an appropriate root to shoot ratio (PubMed:17619151). Required for the inhibition of root growth by ethylene in etiolated seedlings (PubMed:28829777). Functions downstream of the ethylene-response transcription factor EIL1 (PubMed:28829777).</text>
</comment>
<comment type="catalytic activity">
    <reaction evidence="4">
        <text>indole-3-pyruvate + NADPH + O2 + H(+) = (indol-3-yl)acetate + CO2 + NADP(+) + H2O</text>
        <dbReference type="Rhea" id="RHEA:34331"/>
        <dbReference type="ChEBI" id="CHEBI:15377"/>
        <dbReference type="ChEBI" id="CHEBI:15378"/>
        <dbReference type="ChEBI" id="CHEBI:15379"/>
        <dbReference type="ChEBI" id="CHEBI:16526"/>
        <dbReference type="ChEBI" id="CHEBI:17640"/>
        <dbReference type="ChEBI" id="CHEBI:30854"/>
        <dbReference type="ChEBI" id="CHEBI:57783"/>
        <dbReference type="ChEBI" id="CHEBI:58349"/>
        <dbReference type="EC" id="1.14.13.168"/>
    </reaction>
</comment>
<comment type="cofactor">
    <cofactor evidence="4">
        <name>FAD</name>
        <dbReference type="ChEBI" id="CHEBI:57692"/>
    </cofactor>
</comment>
<comment type="subcellular location">
    <subcellularLocation>
        <location evidence="2">Endoplasmic reticulum</location>
    </subcellularLocation>
</comment>
<comment type="tissue specificity">
    <text evidence="2 3 4">Expressed in leaves, young panicles and young kernels (PubMed:17619151). Highly expressed in embryos. Expressed in roots, shoots and panicles (PubMed:18293011). Expressed in root tips, leaves, stems, young stem nodes and developing grains (PubMed:28829777).</text>
</comment>
<comment type="induction">
    <text evidence="4">Induced by ethylene.</text>
</comment>
<comment type="disruption phenotype">
    <text evidence="2 4">Narrow and rolled leaf phenotype (PubMed:17619151, PubMed:28829777). Reduced root growth (PubMed:17619151). Tolerance to salt stress (PubMed:28829777). Reduced response to inhibition of root elongation by ethylene (PubMed:28829777).</text>
</comment>
<comment type="miscellaneous">
    <text evidence="3 4 5">Calli overexpressing YUCCA8 exhibit high levels of auxin, low regeneration frequency, overgrowing roots and abnormal root morphology.</text>
</comment>
<comment type="similarity">
    <text evidence="10">Belongs to the FMO family.</text>
</comment>
<comment type="sequence caution" evidence="10">
    <conflict type="erroneous gene model prediction">
        <sequence resource="EMBL-CDS" id="AAN06861"/>
    </conflict>
</comment>
<organism>
    <name type="scientific">Oryza sativa subsp. japonica</name>
    <name type="common">Rice</name>
    <dbReference type="NCBI Taxonomy" id="39947"/>
    <lineage>
        <taxon>Eukaryota</taxon>
        <taxon>Viridiplantae</taxon>
        <taxon>Streptophyta</taxon>
        <taxon>Embryophyta</taxon>
        <taxon>Tracheophyta</taxon>
        <taxon>Spermatophyta</taxon>
        <taxon>Magnoliopsida</taxon>
        <taxon>Liliopsida</taxon>
        <taxon>Poales</taxon>
        <taxon>Poaceae</taxon>
        <taxon>BOP clade</taxon>
        <taxon>Oryzoideae</taxon>
        <taxon>Oryzeae</taxon>
        <taxon>Oryzinae</taxon>
        <taxon>Oryza</taxon>
        <taxon>Oryza sativa</taxon>
    </lineage>
</organism>
<feature type="chain" id="PRO_0000445280" description="Indole-3-pyruvate monooxygenase YUCCA8">
    <location>
        <begin position="1"/>
        <end position="421"/>
    </location>
</feature>
<feature type="binding site" evidence="1">
    <location>
        <begin position="30"/>
        <end position="35"/>
    </location>
    <ligand>
        <name>FAD</name>
        <dbReference type="ChEBI" id="CHEBI:57692"/>
    </ligand>
</feature>
<feature type="binding site" evidence="1">
    <location>
        <begin position="201"/>
        <end position="206"/>
    </location>
    <ligand>
        <name>NADP(+)</name>
        <dbReference type="ChEBI" id="CHEBI:58349"/>
    </ligand>
</feature>
<feature type="mutagenesis site" description="In nal7; narrow and culred leaf phenotype." evidence="2">
    <original>G</original>
    <variation>V</variation>
    <location>
        <position position="201"/>
    </location>
</feature>
<reference key="1">
    <citation type="journal article" date="2008" name="Mol. Genet. Genomics">
        <title>NARROW LEAF 7 controls leaf shape mediated by auxin in rice.</title>
        <authorList>
            <person name="Fujino K."/>
            <person name="Matsuda Y."/>
            <person name="Ozawa K."/>
            <person name="Nishimura T."/>
            <person name="Koshiba T."/>
            <person name="Fraaije M.W."/>
            <person name="Sekiguchi H."/>
        </authorList>
    </citation>
    <scope>NUCLEOTIDE SEQUENCE [GENOMIC DNA]</scope>
    <scope>FUNCTION</scope>
    <scope>TISSUE SPECIFICITY</scope>
    <scope>MUTAGENESIS OF GLY-201</scope>
</reference>
<reference key="2">
    <citation type="journal article" date="2005" name="Genome Res.">
        <title>Sequence, annotation, and analysis of synteny between rice chromosome 3 and diverged grass species.</title>
        <authorList>
            <consortium name="The rice chromosome 3 sequencing consortium"/>
            <person name="Buell C.R."/>
            <person name="Yuan Q."/>
            <person name="Ouyang S."/>
            <person name="Liu J."/>
            <person name="Zhu W."/>
            <person name="Wang A."/>
            <person name="Maiti R."/>
            <person name="Haas B."/>
            <person name="Wortman J."/>
            <person name="Pertea M."/>
            <person name="Jones K.M."/>
            <person name="Kim M."/>
            <person name="Overton L."/>
            <person name="Tsitrin T."/>
            <person name="Fadrosh D."/>
            <person name="Bera J."/>
            <person name="Weaver B."/>
            <person name="Jin S."/>
            <person name="Johri S."/>
            <person name="Reardon M."/>
            <person name="Webb K."/>
            <person name="Hill J."/>
            <person name="Moffat K."/>
            <person name="Tallon L."/>
            <person name="Van Aken S."/>
            <person name="Lewis M."/>
            <person name="Utterback T."/>
            <person name="Feldblyum T."/>
            <person name="Zismann V."/>
            <person name="Iobst S."/>
            <person name="Hsiao J."/>
            <person name="de Vazeille A.R."/>
            <person name="Salzberg S.L."/>
            <person name="White O."/>
            <person name="Fraser C.M."/>
            <person name="Yu Y."/>
            <person name="Kim H."/>
            <person name="Rambo T."/>
            <person name="Currie J."/>
            <person name="Collura K."/>
            <person name="Kernodle-Thompson S."/>
            <person name="Wei F."/>
            <person name="Kudrna K."/>
            <person name="Ammiraju J.S.S."/>
            <person name="Luo M."/>
            <person name="Goicoechea J.L."/>
            <person name="Wing R.A."/>
            <person name="Henry D."/>
            <person name="Oates R."/>
            <person name="Palmer M."/>
            <person name="Pries G."/>
            <person name="Saski C."/>
            <person name="Simmons J."/>
            <person name="Soderlund C."/>
            <person name="Nelson W."/>
            <person name="de la Bastide M."/>
            <person name="Spiegel L."/>
            <person name="Nascimento L."/>
            <person name="Huang E."/>
            <person name="Preston R."/>
            <person name="Zutavern T."/>
            <person name="Palmer L."/>
            <person name="O'Shaughnessy A."/>
            <person name="Dike S."/>
            <person name="McCombie W.R."/>
            <person name="Minx P."/>
            <person name="Cordum H."/>
            <person name="Wilson R."/>
            <person name="Jin W."/>
            <person name="Lee H.R."/>
            <person name="Jiang J."/>
            <person name="Jackson S."/>
        </authorList>
    </citation>
    <scope>NUCLEOTIDE SEQUENCE [LARGE SCALE GENOMIC DNA]</scope>
    <source>
        <strain>cv. Nipponbare</strain>
    </source>
</reference>
<reference key="3">
    <citation type="journal article" date="2005" name="Nature">
        <title>The map-based sequence of the rice genome.</title>
        <authorList>
            <consortium name="International rice genome sequencing project (IRGSP)"/>
        </authorList>
    </citation>
    <scope>NUCLEOTIDE SEQUENCE [LARGE SCALE GENOMIC DNA]</scope>
    <source>
        <strain>cv. Nipponbare</strain>
    </source>
</reference>
<reference key="4">
    <citation type="journal article" date="2008" name="Nucleic Acids Res.">
        <title>The rice annotation project database (RAP-DB): 2008 update.</title>
        <authorList>
            <consortium name="The rice annotation project (RAP)"/>
        </authorList>
    </citation>
    <scope>GENOME REANNOTATION</scope>
    <source>
        <strain>cv. Nipponbare</strain>
    </source>
</reference>
<reference key="5">
    <citation type="journal article" date="2013" name="Rice">
        <title>Improvement of the Oryza sativa Nipponbare reference genome using next generation sequence and optical map data.</title>
        <authorList>
            <person name="Kawahara Y."/>
            <person name="de la Bastide M."/>
            <person name="Hamilton J.P."/>
            <person name="Kanamori H."/>
            <person name="McCombie W.R."/>
            <person name="Ouyang S."/>
            <person name="Schwartz D.C."/>
            <person name="Tanaka T."/>
            <person name="Wu J."/>
            <person name="Zhou S."/>
            <person name="Childs K.L."/>
            <person name="Davidson R.M."/>
            <person name="Lin H."/>
            <person name="Quesada-Ocampo L."/>
            <person name="Vaillancourt B."/>
            <person name="Sakai H."/>
            <person name="Lee S.S."/>
            <person name="Kim J."/>
            <person name="Numa H."/>
            <person name="Itoh T."/>
            <person name="Buell C.R."/>
            <person name="Matsumoto T."/>
        </authorList>
    </citation>
    <scope>GENOME REANNOTATION</scope>
    <source>
        <strain>cv. Nipponbare</strain>
    </source>
</reference>
<reference key="6">
    <citation type="journal article" date="2003" name="Science">
        <title>Collection, mapping, and annotation of over 28,000 cDNA clones from japonica rice.</title>
        <authorList>
            <consortium name="The rice full-length cDNA consortium"/>
        </authorList>
    </citation>
    <scope>NUCLEOTIDE SEQUENCE [LARGE SCALE MRNA]</scope>
    <source>
        <strain>cv. Nipponbare</strain>
    </source>
</reference>
<reference key="7">
    <citation type="journal article" date="2007" name="Plant Mol. Biol.">
        <title>Constitutively wilted 1, a member of the rice YUCCA gene family, is required for maintaining water homeostasis and an appropriate root to shoot ratio.</title>
        <authorList>
            <person name="Woo Y.M."/>
            <person name="Park H.J."/>
            <person name="Su'udi M."/>
            <person name="Yang J.I."/>
            <person name="Park J.J."/>
            <person name="Back K."/>
            <person name="Park Y.M."/>
            <person name="An G."/>
        </authorList>
    </citation>
    <scope>FUNCTION</scope>
    <scope>SUBCELLULAR LOCATION</scope>
    <scope>TISSUE SPECIFICITY</scope>
    <scope>DISRUPTION PHENOTYPE</scope>
</reference>
<reference key="8">
    <citation type="journal article" date="2017" name="PLoS Genet.">
        <title>The activation of OsEIL1 on YUC8 transcription and auxin biosynthesis is required for ethylene-inhibited root elongation in rice early seedling development.</title>
        <authorList>
            <person name="Qin H."/>
            <person name="Zhang Z."/>
            <person name="Wang J."/>
            <person name="Chen X."/>
            <person name="Wei P."/>
            <person name="Huang R."/>
        </authorList>
    </citation>
    <scope>FUNCTION</scope>
    <scope>CATALYTIC ACTIVITY</scope>
    <scope>COFACTOR</scope>
    <scope>TISSUE SPECIFICITY</scope>
    <scope>INDUCTION BY ETHYLENE</scope>
    <scope>DISRUPTION PHENOTYPE</scope>
    <source>
        <strain>cv. Hwayoung</strain>
    </source>
</reference>
<reference key="9">
    <citation type="journal article" date="2018" name="Front. Plant Sci.">
        <title>The YUCCA-auxin-WOX11 module controls crown root development in rice.</title>
        <authorList>
            <person name="Zhang T."/>
            <person name="Li R."/>
            <person name="Xing J."/>
            <person name="Yan L."/>
            <person name="Wang R."/>
            <person name="Zhao Y."/>
        </authorList>
    </citation>
    <scope>FUNCTION</scope>
</reference>
<gene>
    <name evidence="9" type="primary">YUCCA8</name>
    <name evidence="6" type="synonym">COW1</name>
    <name evidence="7" type="synonym">NAL7</name>
    <name evidence="8" type="synonym">REIN7</name>
    <name evidence="8" type="synonym">YUCA8</name>
    <name evidence="13" type="ordered locus">Os03g0162000</name>
    <name evidence="12" type="ordered locus">LOC_Os03g06654</name>
    <name evidence="11" type="ORF">OJ1607A12.11</name>
</gene>
<name>YUC8_ORYSJ</name>